<evidence type="ECO:0000255" key="1">
    <source>
        <dbReference type="HAMAP-Rule" id="MF_01328"/>
    </source>
</evidence>
<evidence type="ECO:0000256" key="2">
    <source>
        <dbReference type="SAM" id="MobiDB-lite"/>
    </source>
</evidence>
<evidence type="ECO:0000305" key="3"/>
<sequence length="201" mass="21879">MELTITGSGKGISVSDAAFAKDFNEALVHQVVTAYMAAGRQGTKAQKTRSEVSGGGKKPWRQKGTGRARAGTIRSPIWRSGGVTFAAKPRDFEQKVNRKMYRAAMRSIFSELVRQERLVVVDDMNVDTPKTKAFTAKLSDLGVSNALILSENVEQNLHLASRNVPHVDVRDVAGLDPVSLVAFEKVVVTVPALKKIEEMLG</sequence>
<protein>
    <recommendedName>
        <fullName evidence="1">Large ribosomal subunit protein uL4</fullName>
    </recommendedName>
    <alternativeName>
        <fullName evidence="3">50S ribosomal protein L4</fullName>
    </alternativeName>
</protein>
<name>RL4_MARN8</name>
<organism>
    <name type="scientific">Marinobacter nauticus (strain ATCC 700491 / DSM 11845 / VT8)</name>
    <name type="common">Marinobacter aquaeolei</name>
    <dbReference type="NCBI Taxonomy" id="351348"/>
    <lineage>
        <taxon>Bacteria</taxon>
        <taxon>Pseudomonadati</taxon>
        <taxon>Pseudomonadota</taxon>
        <taxon>Gammaproteobacteria</taxon>
        <taxon>Pseudomonadales</taxon>
        <taxon>Marinobacteraceae</taxon>
        <taxon>Marinobacter</taxon>
    </lineage>
</organism>
<keyword id="KW-0687">Ribonucleoprotein</keyword>
<keyword id="KW-0689">Ribosomal protein</keyword>
<keyword id="KW-0694">RNA-binding</keyword>
<keyword id="KW-0699">rRNA-binding</keyword>
<reference key="1">
    <citation type="journal article" date="2011" name="Appl. Environ. Microbiol.">
        <title>Genomic potential of Marinobacter aquaeolei, a biogeochemical 'opportunitroph'.</title>
        <authorList>
            <person name="Singer E."/>
            <person name="Webb E.A."/>
            <person name="Nelson W.C."/>
            <person name="Heidelberg J.F."/>
            <person name="Ivanova N."/>
            <person name="Pati A."/>
            <person name="Edwards K.J."/>
        </authorList>
    </citation>
    <scope>NUCLEOTIDE SEQUENCE [LARGE SCALE GENOMIC DNA]</scope>
    <source>
        <strain>ATCC 700491 / DSM 11845 / VT8</strain>
    </source>
</reference>
<comment type="function">
    <text evidence="1">One of the primary rRNA binding proteins, this protein initially binds near the 5'-end of the 23S rRNA. It is important during the early stages of 50S assembly. It makes multiple contacts with different domains of the 23S rRNA in the assembled 50S subunit and ribosome.</text>
</comment>
<comment type="function">
    <text evidence="1">Forms part of the polypeptide exit tunnel.</text>
</comment>
<comment type="subunit">
    <text evidence="1">Part of the 50S ribosomal subunit.</text>
</comment>
<comment type="similarity">
    <text evidence="1">Belongs to the universal ribosomal protein uL4 family.</text>
</comment>
<accession>A1TYJ8</accession>
<dbReference type="EMBL" id="CP000514">
    <property type="protein sequence ID" value="ABM17817.1"/>
    <property type="molecule type" value="Genomic_DNA"/>
</dbReference>
<dbReference type="RefSeq" id="WP_011784247.1">
    <property type="nucleotide sequence ID" value="NC_008740.1"/>
</dbReference>
<dbReference type="SMR" id="A1TYJ8"/>
<dbReference type="STRING" id="351348.Maqu_0720"/>
<dbReference type="GeneID" id="31820095"/>
<dbReference type="KEGG" id="maq:Maqu_0720"/>
<dbReference type="eggNOG" id="COG0088">
    <property type="taxonomic scope" value="Bacteria"/>
</dbReference>
<dbReference type="HOGENOM" id="CLU_041575_5_2_6"/>
<dbReference type="OrthoDB" id="9803201at2"/>
<dbReference type="Proteomes" id="UP000000998">
    <property type="component" value="Chromosome"/>
</dbReference>
<dbReference type="GO" id="GO:1990904">
    <property type="term" value="C:ribonucleoprotein complex"/>
    <property type="evidence" value="ECO:0007669"/>
    <property type="project" value="UniProtKB-KW"/>
</dbReference>
<dbReference type="GO" id="GO:0005840">
    <property type="term" value="C:ribosome"/>
    <property type="evidence" value="ECO:0007669"/>
    <property type="project" value="UniProtKB-KW"/>
</dbReference>
<dbReference type="GO" id="GO:0019843">
    <property type="term" value="F:rRNA binding"/>
    <property type="evidence" value="ECO:0007669"/>
    <property type="project" value="UniProtKB-UniRule"/>
</dbReference>
<dbReference type="GO" id="GO:0003735">
    <property type="term" value="F:structural constituent of ribosome"/>
    <property type="evidence" value="ECO:0007669"/>
    <property type="project" value="InterPro"/>
</dbReference>
<dbReference type="GO" id="GO:0006412">
    <property type="term" value="P:translation"/>
    <property type="evidence" value="ECO:0007669"/>
    <property type="project" value="UniProtKB-UniRule"/>
</dbReference>
<dbReference type="FunFam" id="3.40.1370.10:FF:000001">
    <property type="entry name" value="50S ribosomal protein L4"/>
    <property type="match status" value="1"/>
</dbReference>
<dbReference type="Gene3D" id="3.40.1370.10">
    <property type="match status" value="1"/>
</dbReference>
<dbReference type="HAMAP" id="MF_01328_B">
    <property type="entry name" value="Ribosomal_uL4_B"/>
    <property type="match status" value="1"/>
</dbReference>
<dbReference type="InterPro" id="IPR002136">
    <property type="entry name" value="Ribosomal_uL4"/>
</dbReference>
<dbReference type="InterPro" id="IPR013005">
    <property type="entry name" value="Ribosomal_uL4-like"/>
</dbReference>
<dbReference type="InterPro" id="IPR023574">
    <property type="entry name" value="Ribosomal_uL4_dom_sf"/>
</dbReference>
<dbReference type="NCBIfam" id="TIGR03953">
    <property type="entry name" value="rplD_bact"/>
    <property type="match status" value="1"/>
</dbReference>
<dbReference type="PANTHER" id="PTHR10746">
    <property type="entry name" value="50S RIBOSOMAL PROTEIN L4"/>
    <property type="match status" value="1"/>
</dbReference>
<dbReference type="PANTHER" id="PTHR10746:SF6">
    <property type="entry name" value="LARGE RIBOSOMAL SUBUNIT PROTEIN UL4M"/>
    <property type="match status" value="1"/>
</dbReference>
<dbReference type="Pfam" id="PF00573">
    <property type="entry name" value="Ribosomal_L4"/>
    <property type="match status" value="1"/>
</dbReference>
<dbReference type="SUPFAM" id="SSF52166">
    <property type="entry name" value="Ribosomal protein L4"/>
    <property type="match status" value="1"/>
</dbReference>
<proteinExistence type="inferred from homology"/>
<gene>
    <name evidence="1" type="primary">rplD</name>
    <name type="ordered locus">Maqu_0720</name>
</gene>
<feature type="chain" id="PRO_1000052434" description="Large ribosomal subunit protein uL4">
    <location>
        <begin position="1"/>
        <end position="201"/>
    </location>
</feature>
<feature type="region of interest" description="Disordered" evidence="2">
    <location>
        <begin position="39"/>
        <end position="70"/>
    </location>
</feature>